<sequence>MWKWKVILLFLAEMFVSGVNGDCACYEANNVTGKSAPISNSYMTEDFSPCYLPCSYVAYSGDETYGWTGLVLNWKTTTNSGGIIQIFDGPSATGTPIIQVAEGETIAAGIGKSLIKSSLPVITIKYSQTGSGASMFILNINNGTFVTNVYYGSISTAAGLAPIAVSTTTTAMPTTRSYSNPNFAYDPYFITHDIFVVINQRTSGGMAALTSLNALAINFVTLLSTTTDINSVSSSRLSLATLTPYDPYYSVQGGIWELSATDVLNNVPRSGVTIEGDIDSALIGLADLAFTVNKNASTDTRNNVQRSVVLLTAEWPSNALLGDNVASKFTELGLNLLVVGYNLTDAETSQLLRTDRWYNAINSSDSKITNVAAFVNPFYFNNGANNFWCPPFGITNSVDGTYSWFQEPYNYTGPHGINGVWTDPFDGQTGRYCNFANNQYVYQNNAGGSVKVQVYFELEAGKDFLNFYDASNNLIASFTGYEIAGSSFFTSTTTLTARFTSDNKSIFRGFWVSITPQP</sequence>
<name>YE2H4_CAEEL</name>
<accession>Q19040</accession>
<dbReference type="EMBL" id="Z68003">
    <property type="protein sequence ID" value="CAA91977.3"/>
    <property type="molecule type" value="Genomic_DNA"/>
</dbReference>
<dbReference type="PIR" id="T20422">
    <property type="entry name" value="T20422"/>
</dbReference>
<dbReference type="RefSeq" id="NP_510379.3">
    <property type="nucleotide sequence ID" value="NM_077978.4"/>
</dbReference>
<dbReference type="FunCoup" id="Q19040">
    <property type="interactions" value="1522"/>
</dbReference>
<dbReference type="iPTMnet" id="Q19040"/>
<dbReference type="PaxDb" id="6239-E02H4.4"/>
<dbReference type="EnsemblMetazoa" id="E02H4.4.1">
    <property type="protein sequence ID" value="E02H4.4.1"/>
    <property type="gene ID" value="WBGene00008462"/>
</dbReference>
<dbReference type="GeneID" id="183995"/>
<dbReference type="KEGG" id="cel:CELE_E02H4.4"/>
<dbReference type="UCSC" id="E02H4.4">
    <property type="organism name" value="c. elegans"/>
</dbReference>
<dbReference type="AGR" id="WB:WBGene00008462"/>
<dbReference type="CTD" id="183995"/>
<dbReference type="WormBase" id="E02H4.4">
    <property type="protein sequence ID" value="CE44096"/>
    <property type="gene ID" value="WBGene00008462"/>
</dbReference>
<dbReference type="eggNOG" id="ENOG502TG1S">
    <property type="taxonomic scope" value="Eukaryota"/>
</dbReference>
<dbReference type="GeneTree" id="ENSGT00550000075913"/>
<dbReference type="HOGENOM" id="CLU_520963_0_0_1"/>
<dbReference type="InParanoid" id="Q19040"/>
<dbReference type="OMA" id="FYDASNN"/>
<dbReference type="OrthoDB" id="5815942at2759"/>
<dbReference type="PRO" id="PR:Q19040"/>
<dbReference type="Proteomes" id="UP000001940">
    <property type="component" value="Chromosome X"/>
</dbReference>
<dbReference type="Bgee" id="WBGene00008462">
    <property type="expression patterns" value="Expressed in embryo and 3 other cell types or tissues"/>
</dbReference>
<dbReference type="GO" id="GO:0005576">
    <property type="term" value="C:extracellular region"/>
    <property type="evidence" value="ECO:0007669"/>
    <property type="project" value="UniProtKB-SubCell"/>
</dbReference>
<dbReference type="Gene3D" id="2.60.120.290">
    <property type="entry name" value="Spermadhesin, CUB domain"/>
    <property type="match status" value="1"/>
</dbReference>
<dbReference type="InterPro" id="IPR035914">
    <property type="entry name" value="Sperma_CUB_dom_sf"/>
</dbReference>
<dbReference type="PANTHER" id="PTHR21690">
    <property type="entry name" value="CUB DOMAIN-CONTAINING PROTEIN-RELATED"/>
    <property type="match status" value="1"/>
</dbReference>
<dbReference type="PANTHER" id="PTHR21690:SF2">
    <property type="entry name" value="CUB DOMAIN-CONTAINING PROTEIN-RELATED"/>
    <property type="match status" value="1"/>
</dbReference>
<dbReference type="SUPFAM" id="SSF49854">
    <property type="entry name" value="Spermadhesin, CUB domain"/>
    <property type="match status" value="1"/>
</dbReference>
<gene>
    <name type="ORF">E02H4.4</name>
</gene>
<comment type="subcellular location">
    <subcellularLocation>
        <location evidence="4">Secreted</location>
    </subcellularLocation>
</comment>
<reference key="1">
    <citation type="journal article" date="1998" name="Science">
        <title>Genome sequence of the nematode C. elegans: a platform for investigating biology.</title>
        <authorList>
            <consortium name="The C. elegans sequencing consortium"/>
        </authorList>
    </citation>
    <scope>NUCLEOTIDE SEQUENCE [LARGE SCALE GENOMIC DNA]</scope>
    <source>
        <strain>Bristol N2</strain>
    </source>
</reference>
<reference key="2">
    <citation type="journal article" date="2003" name="Nat. Biotechnol.">
        <title>Lectin affinity capture, isotope-coded tagging and mass spectrometry to identify N-linked glycoproteins.</title>
        <authorList>
            <person name="Kaji H."/>
            <person name="Saito H."/>
            <person name="Yamauchi Y."/>
            <person name="Shinkawa T."/>
            <person name="Taoka M."/>
            <person name="Hirabayashi J."/>
            <person name="Kasai K."/>
            <person name="Takahashi N."/>
            <person name="Isobe T."/>
        </authorList>
    </citation>
    <scope>GLYCOSYLATION [LARGE SCALE ANALYSIS] AT ASN-295</scope>
    <scope>IDENTIFICATION BY MASS SPECTROMETRY</scope>
    <source>
        <strain>Bristol N2</strain>
    </source>
</reference>
<reference key="3">
    <citation type="journal article" date="2007" name="Mol. Cell. Proteomics">
        <title>Proteomics reveals N-linked glycoprotein diversity in Caenorhabditis elegans and suggests an atypical translocation mechanism for integral membrane proteins.</title>
        <authorList>
            <person name="Kaji H."/>
            <person name="Kamiie J."/>
            <person name="Kawakami H."/>
            <person name="Kido K."/>
            <person name="Yamauchi Y."/>
            <person name="Shinkawa T."/>
            <person name="Taoka M."/>
            <person name="Takahashi N."/>
            <person name="Isobe T."/>
        </authorList>
    </citation>
    <scope>GLYCOSYLATION [LARGE SCALE ANALYSIS] AT ASN-295 AND ASN-362</scope>
    <scope>IDENTIFICATION BY MASS SPECTROMETRY</scope>
    <source>
        <strain>Bristol N2</strain>
    </source>
</reference>
<protein>
    <recommendedName>
        <fullName>Uncharacterized protein E02H4.4</fullName>
    </recommendedName>
</protein>
<organism>
    <name type="scientific">Caenorhabditis elegans</name>
    <dbReference type="NCBI Taxonomy" id="6239"/>
    <lineage>
        <taxon>Eukaryota</taxon>
        <taxon>Metazoa</taxon>
        <taxon>Ecdysozoa</taxon>
        <taxon>Nematoda</taxon>
        <taxon>Chromadorea</taxon>
        <taxon>Rhabditida</taxon>
        <taxon>Rhabditina</taxon>
        <taxon>Rhabditomorpha</taxon>
        <taxon>Rhabditoidea</taxon>
        <taxon>Rhabditidae</taxon>
        <taxon>Peloderinae</taxon>
        <taxon>Caenorhabditis</taxon>
    </lineage>
</organism>
<keyword id="KW-0325">Glycoprotein</keyword>
<keyword id="KW-1185">Reference proteome</keyword>
<keyword id="KW-0964">Secreted</keyword>
<keyword id="KW-0732">Signal</keyword>
<evidence type="ECO:0000255" key="1"/>
<evidence type="ECO:0000269" key="2">
    <source>
    </source>
</evidence>
<evidence type="ECO:0000269" key="3">
    <source>
    </source>
</evidence>
<evidence type="ECO:0000305" key="4"/>
<feature type="signal peptide" evidence="1">
    <location>
        <begin position="1"/>
        <end position="21"/>
    </location>
</feature>
<feature type="chain" id="PRO_0000250572" description="Uncharacterized protein E02H4.4">
    <location>
        <begin position="22"/>
        <end position="518"/>
    </location>
</feature>
<feature type="domain" description="CUB">
    <location>
        <begin position="389"/>
        <end position="517"/>
    </location>
</feature>
<feature type="glycosylation site" description="N-linked (GlcNAc...) asparagine" evidence="1">
    <location>
        <position position="30"/>
    </location>
</feature>
<feature type="glycosylation site" description="N-linked (GlcNAc...) asparagine" evidence="1">
    <location>
        <position position="142"/>
    </location>
</feature>
<feature type="glycosylation site" description="N-linked (GlcNAc...) asparagine" evidence="2 3">
    <location>
        <position position="295"/>
    </location>
</feature>
<feature type="glycosylation site" description="N-linked (GlcNAc...) asparagine" evidence="1">
    <location>
        <position position="342"/>
    </location>
</feature>
<feature type="glycosylation site" description="N-linked (GlcNAc...) asparagine" evidence="3">
    <location>
        <position position="362"/>
    </location>
</feature>
<feature type="glycosylation site" description="N-linked (GlcNAc...) asparagine" evidence="1">
    <location>
        <position position="410"/>
    </location>
</feature>
<feature type="glycosylation site" description="N-linked (GlcNAc...) asparagine" evidence="1">
    <location>
        <position position="503"/>
    </location>
</feature>
<proteinExistence type="evidence at protein level"/>